<name>RFCL_PYRNV</name>
<accession>B1YC69</accession>
<evidence type="ECO:0000255" key="1">
    <source>
        <dbReference type="HAMAP-Rule" id="MF_01508"/>
    </source>
</evidence>
<reference key="1">
    <citation type="submission" date="2008-03" db="EMBL/GenBank/DDBJ databases">
        <title>Complete sequence of Thermoproteus neutrophilus V24Sta.</title>
        <authorList>
            <consortium name="US DOE Joint Genome Institute"/>
            <person name="Copeland A."/>
            <person name="Lucas S."/>
            <person name="Lapidus A."/>
            <person name="Glavina del Rio T."/>
            <person name="Dalin E."/>
            <person name="Tice H."/>
            <person name="Bruce D."/>
            <person name="Goodwin L."/>
            <person name="Pitluck S."/>
            <person name="Sims D."/>
            <person name="Brettin T."/>
            <person name="Detter J.C."/>
            <person name="Han C."/>
            <person name="Kuske C.R."/>
            <person name="Schmutz J."/>
            <person name="Larimer F."/>
            <person name="Land M."/>
            <person name="Hauser L."/>
            <person name="Kyrpides N."/>
            <person name="Mikhailova N."/>
            <person name="Biddle J.F."/>
            <person name="Zhang Z."/>
            <person name="Fitz-Gibbon S.T."/>
            <person name="Lowe T.M."/>
            <person name="Saltikov C."/>
            <person name="House C.H."/>
            <person name="Richardson P."/>
        </authorList>
    </citation>
    <scope>NUCLEOTIDE SEQUENCE [LARGE SCALE GENOMIC DNA]</scope>
    <source>
        <strain>DSM 2338 / JCM 9278 / NBRC 100436 / V24Sta</strain>
    </source>
</reference>
<organism>
    <name type="scientific">Pyrobaculum neutrophilum (strain DSM 2338 / JCM 9278 / NBRC 100436 / V24Sta)</name>
    <name type="common">Thermoproteus neutrophilus</name>
    <dbReference type="NCBI Taxonomy" id="444157"/>
    <lineage>
        <taxon>Archaea</taxon>
        <taxon>Thermoproteota</taxon>
        <taxon>Thermoprotei</taxon>
        <taxon>Thermoproteales</taxon>
        <taxon>Thermoproteaceae</taxon>
        <taxon>Pyrobaculum</taxon>
    </lineage>
</organism>
<comment type="function">
    <text evidence="1">Part of the RFC clamp loader complex which loads the PCNA sliding clamp onto DNA.</text>
</comment>
<comment type="subunit">
    <text evidence="1">Heteromultimer composed of small subunits (RfcS) and large subunits (RfcL).</text>
</comment>
<comment type="similarity">
    <text evidence="1">Belongs to the activator 1 small subunits family. RfcL subfamily.</text>
</comment>
<protein>
    <recommendedName>
        <fullName evidence="1">Replication factor C large subunit</fullName>
        <shortName evidence="1">RFC large subunit</shortName>
    </recommendedName>
    <alternativeName>
        <fullName evidence="1">Clamp loader large subunit</fullName>
    </alternativeName>
</protein>
<gene>
    <name evidence="1" type="primary">rfcL</name>
    <name type="ordered locus">Tneu_2009</name>
</gene>
<feature type="chain" id="PRO_1000195422" description="Replication factor C large subunit">
    <location>
        <begin position="1"/>
        <end position="422"/>
    </location>
</feature>
<feature type="binding site" evidence="1">
    <location>
        <begin position="63"/>
        <end position="70"/>
    </location>
    <ligand>
        <name>ATP</name>
        <dbReference type="ChEBI" id="CHEBI:30616"/>
    </ligand>
</feature>
<sequence length="422" mass="47984">MGIPWVEKYRPKAFSEIVNQEEAKTLLASWICARFRAPKEFCARWAKKREKEVAEAKAVLLAGPPGIGKTTVVHALAREIRYELIELNASDIRTGERIKLVVGRGLKESSLFGYEGKLVLFDEVDGLHVKEDEGGLEAIVEIVETAKVPIVMTANNPYDPKFRPLRDISLVVNLKRLSEEEVVEVLRRICTAEGAKCEEEALRSIAKSSLGDLRAAINDLQMYLSGGRKTLTVDDIKRVGERNPQLSMFEVLDRVYRARWFDEARAVSFNPSFDWEQYFLWALETVPVVYKDVETAAAAYDRLSKADMFLGRIKRMQEWELLPYALELALGGVSQVKNKPRLPPFIKYGFPQRLLLLAKSREARRRREALVEYLAQNLHISRSLARSDIIYVLSALARRDPKVVERLSRALGINAIDVKNLL</sequence>
<dbReference type="EMBL" id="CP001014">
    <property type="protein sequence ID" value="ACB40923.1"/>
    <property type="molecule type" value="Genomic_DNA"/>
</dbReference>
<dbReference type="RefSeq" id="WP_012351342.1">
    <property type="nucleotide sequence ID" value="NC_010525.1"/>
</dbReference>
<dbReference type="SMR" id="B1YC69"/>
<dbReference type="STRING" id="444157.Tneu_2009"/>
<dbReference type="GeneID" id="6165705"/>
<dbReference type="KEGG" id="tne:Tneu_2009"/>
<dbReference type="eggNOG" id="arCOG00470">
    <property type="taxonomic scope" value="Archaea"/>
</dbReference>
<dbReference type="HOGENOM" id="CLU_027255_1_1_2"/>
<dbReference type="OrthoDB" id="8658at2157"/>
<dbReference type="Proteomes" id="UP000001694">
    <property type="component" value="Chromosome"/>
</dbReference>
<dbReference type="GO" id="GO:0005524">
    <property type="term" value="F:ATP binding"/>
    <property type="evidence" value="ECO:0007669"/>
    <property type="project" value="UniProtKB-UniRule"/>
</dbReference>
<dbReference type="GO" id="GO:0016887">
    <property type="term" value="F:ATP hydrolysis activity"/>
    <property type="evidence" value="ECO:0007669"/>
    <property type="project" value="InterPro"/>
</dbReference>
<dbReference type="GO" id="GO:0003689">
    <property type="term" value="F:DNA clamp loader activity"/>
    <property type="evidence" value="ECO:0007669"/>
    <property type="project" value="UniProtKB-UniRule"/>
</dbReference>
<dbReference type="GO" id="GO:0006260">
    <property type="term" value="P:DNA replication"/>
    <property type="evidence" value="ECO:0007669"/>
    <property type="project" value="UniProtKB-UniRule"/>
</dbReference>
<dbReference type="CDD" id="cd00009">
    <property type="entry name" value="AAA"/>
    <property type="match status" value="1"/>
</dbReference>
<dbReference type="CDD" id="cd18140">
    <property type="entry name" value="HLD_clamp_RFC"/>
    <property type="match status" value="1"/>
</dbReference>
<dbReference type="Gene3D" id="1.10.8.60">
    <property type="match status" value="1"/>
</dbReference>
<dbReference type="Gene3D" id="3.40.50.300">
    <property type="entry name" value="P-loop containing nucleotide triphosphate hydrolases"/>
    <property type="match status" value="1"/>
</dbReference>
<dbReference type="HAMAP" id="MF_01508">
    <property type="entry name" value="RfcL"/>
    <property type="match status" value="1"/>
</dbReference>
<dbReference type="InterPro" id="IPR003593">
    <property type="entry name" value="AAA+_ATPase"/>
</dbReference>
<dbReference type="InterPro" id="IPR003959">
    <property type="entry name" value="ATPase_AAA_core"/>
</dbReference>
<dbReference type="InterPro" id="IPR027417">
    <property type="entry name" value="P-loop_NTPase"/>
</dbReference>
<dbReference type="InterPro" id="IPR023935">
    <property type="entry name" value="Rep_factor-C_lsu"/>
</dbReference>
<dbReference type="InterPro" id="IPR047854">
    <property type="entry name" value="RFC_lid"/>
</dbReference>
<dbReference type="NCBIfam" id="NF003229">
    <property type="entry name" value="PRK04195.1-5"/>
    <property type="match status" value="1"/>
</dbReference>
<dbReference type="PANTHER" id="PTHR23389">
    <property type="entry name" value="CHROMOSOME TRANSMISSION FIDELITY FACTOR 18"/>
    <property type="match status" value="1"/>
</dbReference>
<dbReference type="PANTHER" id="PTHR23389:SF6">
    <property type="entry name" value="REPLICATION FACTOR C SUBUNIT 1"/>
    <property type="match status" value="1"/>
</dbReference>
<dbReference type="Pfam" id="PF00004">
    <property type="entry name" value="AAA"/>
    <property type="match status" value="1"/>
</dbReference>
<dbReference type="Pfam" id="PF21960">
    <property type="entry name" value="RCF1-5-like_lid"/>
    <property type="match status" value="1"/>
</dbReference>
<dbReference type="SMART" id="SM00382">
    <property type="entry name" value="AAA"/>
    <property type="match status" value="1"/>
</dbReference>
<dbReference type="SUPFAM" id="SSF52540">
    <property type="entry name" value="P-loop containing nucleoside triphosphate hydrolases"/>
    <property type="match status" value="1"/>
</dbReference>
<keyword id="KW-0067">ATP-binding</keyword>
<keyword id="KW-0235">DNA replication</keyword>
<keyword id="KW-0547">Nucleotide-binding</keyword>
<proteinExistence type="inferred from homology"/>